<name>GSA_TROWT</name>
<sequence length="466" mass="49582">MRTNFEWFEEAKRFIPGGVNSPVRAYAAVGGTPRFLAKAQGAYVTDIEGREYVDLVSSWGPLILGHAHPKVIDAVINTAHRGMSYGAPTTLEVELAELVCNRICNAQGIKPVERLRLVSTGTESCMTAIRLARCFTGRDLIVKFSGHYHGHADPFLIDAGSGLVGHPSSGGVPESVAKNTLVVPYNDLAVLEYLFEAYPNQIACIITEACPANMGVIPPDPGFNARVADLGHSHGALIIFDEVITGFRVGSGGFWALETSLASQQPTQAVSEGSVSDSAYSAYVPDLFTFAKVLGGGLPIGAIGGRAEIMDLLSPSGPVYQAGTLSGNPLATAAGLATLRLADSNIYEHMNRVARALINEIQSAFHDAGVPCTVQSAGNLFGISFSAIAPRDFTQATSQEHWRYSNFFHSMLNSGVLLPPSVYEAWFVSAAFDDRAIERVVNALPDAVRAAGSAPARPKGFEPPTF</sequence>
<organism>
    <name type="scientific">Tropheryma whipplei (strain Twist)</name>
    <name type="common">Whipple's bacillus</name>
    <dbReference type="NCBI Taxonomy" id="203267"/>
    <lineage>
        <taxon>Bacteria</taxon>
        <taxon>Bacillati</taxon>
        <taxon>Actinomycetota</taxon>
        <taxon>Actinomycetes</taxon>
        <taxon>Micrococcales</taxon>
        <taxon>Tropherymataceae</taxon>
        <taxon>Tropheryma</taxon>
    </lineage>
</organism>
<evidence type="ECO:0000255" key="1">
    <source>
        <dbReference type="HAMAP-Rule" id="MF_00375"/>
    </source>
</evidence>
<proteinExistence type="inferred from homology"/>
<reference key="1">
    <citation type="journal article" date="2003" name="Genome Res.">
        <title>Tropheryma whipplei twist: a human pathogenic Actinobacteria with a reduced genome.</title>
        <authorList>
            <person name="Raoult D."/>
            <person name="Ogata H."/>
            <person name="Audic S."/>
            <person name="Robert C."/>
            <person name="Suhre K."/>
            <person name="Drancourt M."/>
            <person name="Claverie J.-M."/>
        </authorList>
    </citation>
    <scope>NUCLEOTIDE SEQUENCE [LARGE SCALE GENOMIC DNA]</scope>
    <source>
        <strain>Twist</strain>
    </source>
</reference>
<comment type="catalytic activity">
    <reaction evidence="1">
        <text>(S)-4-amino-5-oxopentanoate = 5-aminolevulinate</text>
        <dbReference type="Rhea" id="RHEA:14265"/>
        <dbReference type="ChEBI" id="CHEBI:57501"/>
        <dbReference type="ChEBI" id="CHEBI:356416"/>
        <dbReference type="EC" id="5.4.3.8"/>
    </reaction>
</comment>
<comment type="cofactor">
    <cofactor evidence="1">
        <name>pyridoxal 5'-phosphate</name>
        <dbReference type="ChEBI" id="CHEBI:597326"/>
    </cofactor>
</comment>
<comment type="pathway">
    <text evidence="1">Porphyrin-containing compound metabolism; protoporphyrin-IX biosynthesis; 5-aminolevulinate from L-glutamyl-tRNA(Glu): step 2/2.</text>
</comment>
<comment type="subunit">
    <text evidence="1">Homodimer.</text>
</comment>
<comment type="subcellular location">
    <subcellularLocation>
        <location evidence="1">Cytoplasm</location>
    </subcellularLocation>
</comment>
<comment type="similarity">
    <text evidence="1">Belongs to the class-III pyridoxal-phosphate-dependent aminotransferase family. HemL subfamily.</text>
</comment>
<protein>
    <recommendedName>
        <fullName evidence="1">Glutamate-1-semialdehyde 2,1-aminomutase</fullName>
        <shortName evidence="1">GSA</shortName>
        <ecNumber evidence="1">5.4.3.8</ecNumber>
    </recommendedName>
    <alternativeName>
        <fullName evidence="1">Glutamate-1-semialdehyde aminotransferase</fullName>
        <shortName evidence="1">GSA-AT</shortName>
    </alternativeName>
</protein>
<accession>Q83FJ5</accession>
<gene>
    <name evidence="1" type="primary">hemL</name>
    <name type="ordered locus">TWT_729</name>
</gene>
<keyword id="KW-0963">Cytoplasm</keyword>
<keyword id="KW-0413">Isomerase</keyword>
<keyword id="KW-0627">Porphyrin biosynthesis</keyword>
<keyword id="KW-0663">Pyridoxal phosphate</keyword>
<keyword id="KW-1185">Reference proteome</keyword>
<dbReference type="EC" id="5.4.3.8" evidence="1"/>
<dbReference type="EMBL" id="AE014184">
    <property type="protein sequence ID" value="AAO44826.1"/>
    <property type="molecule type" value="Genomic_DNA"/>
</dbReference>
<dbReference type="SMR" id="Q83FJ5"/>
<dbReference type="STRING" id="203267.TWT_729"/>
<dbReference type="KEGG" id="twh:TWT_729"/>
<dbReference type="eggNOG" id="COG0001">
    <property type="taxonomic scope" value="Bacteria"/>
</dbReference>
<dbReference type="HOGENOM" id="CLU_016922_1_5_11"/>
<dbReference type="OrthoDB" id="9801052at2"/>
<dbReference type="UniPathway" id="UPA00251">
    <property type="reaction ID" value="UER00317"/>
</dbReference>
<dbReference type="Proteomes" id="UP000002200">
    <property type="component" value="Chromosome"/>
</dbReference>
<dbReference type="GO" id="GO:0005737">
    <property type="term" value="C:cytoplasm"/>
    <property type="evidence" value="ECO:0007669"/>
    <property type="project" value="UniProtKB-SubCell"/>
</dbReference>
<dbReference type="GO" id="GO:0042286">
    <property type="term" value="F:glutamate-1-semialdehyde 2,1-aminomutase activity"/>
    <property type="evidence" value="ECO:0007669"/>
    <property type="project" value="UniProtKB-UniRule"/>
</dbReference>
<dbReference type="GO" id="GO:0030170">
    <property type="term" value="F:pyridoxal phosphate binding"/>
    <property type="evidence" value="ECO:0007669"/>
    <property type="project" value="InterPro"/>
</dbReference>
<dbReference type="GO" id="GO:0008483">
    <property type="term" value="F:transaminase activity"/>
    <property type="evidence" value="ECO:0007669"/>
    <property type="project" value="InterPro"/>
</dbReference>
<dbReference type="GO" id="GO:0006782">
    <property type="term" value="P:protoporphyrinogen IX biosynthetic process"/>
    <property type="evidence" value="ECO:0007669"/>
    <property type="project" value="UniProtKB-UniRule"/>
</dbReference>
<dbReference type="CDD" id="cd00610">
    <property type="entry name" value="OAT_like"/>
    <property type="match status" value="1"/>
</dbReference>
<dbReference type="Gene3D" id="3.90.1150.10">
    <property type="entry name" value="Aspartate Aminotransferase, domain 1"/>
    <property type="match status" value="1"/>
</dbReference>
<dbReference type="Gene3D" id="3.40.640.10">
    <property type="entry name" value="Type I PLP-dependent aspartate aminotransferase-like (Major domain)"/>
    <property type="match status" value="1"/>
</dbReference>
<dbReference type="HAMAP" id="MF_00375">
    <property type="entry name" value="HemL_aminotrans_3"/>
    <property type="match status" value="1"/>
</dbReference>
<dbReference type="InterPro" id="IPR004639">
    <property type="entry name" value="4pyrrol_synth_GluAld_NH2Trfase"/>
</dbReference>
<dbReference type="InterPro" id="IPR005814">
    <property type="entry name" value="Aminotrans_3"/>
</dbReference>
<dbReference type="InterPro" id="IPR015424">
    <property type="entry name" value="PyrdxlP-dep_Trfase"/>
</dbReference>
<dbReference type="InterPro" id="IPR015421">
    <property type="entry name" value="PyrdxlP-dep_Trfase_major"/>
</dbReference>
<dbReference type="InterPro" id="IPR015422">
    <property type="entry name" value="PyrdxlP-dep_Trfase_small"/>
</dbReference>
<dbReference type="NCBIfam" id="NF000818">
    <property type="entry name" value="PRK00062.1"/>
    <property type="match status" value="1"/>
</dbReference>
<dbReference type="PANTHER" id="PTHR43713">
    <property type="entry name" value="GLUTAMATE-1-SEMIALDEHYDE 2,1-AMINOMUTASE"/>
    <property type="match status" value="1"/>
</dbReference>
<dbReference type="PANTHER" id="PTHR43713:SF3">
    <property type="entry name" value="GLUTAMATE-1-SEMIALDEHYDE 2,1-AMINOMUTASE 1, CHLOROPLASTIC-RELATED"/>
    <property type="match status" value="1"/>
</dbReference>
<dbReference type="Pfam" id="PF00202">
    <property type="entry name" value="Aminotran_3"/>
    <property type="match status" value="2"/>
</dbReference>
<dbReference type="SUPFAM" id="SSF53383">
    <property type="entry name" value="PLP-dependent transferases"/>
    <property type="match status" value="1"/>
</dbReference>
<feature type="chain" id="PRO_0000243641" description="Glutamate-1-semialdehyde 2,1-aminomutase">
    <location>
        <begin position="1"/>
        <end position="466"/>
    </location>
</feature>
<feature type="modified residue" description="N6-(pyridoxal phosphate)lysine" evidence="1">
    <location>
        <position position="292"/>
    </location>
</feature>